<organism>
    <name type="scientific">Mus musculus</name>
    <name type="common">Mouse</name>
    <dbReference type="NCBI Taxonomy" id="10090"/>
    <lineage>
        <taxon>Eukaryota</taxon>
        <taxon>Metazoa</taxon>
        <taxon>Chordata</taxon>
        <taxon>Craniata</taxon>
        <taxon>Vertebrata</taxon>
        <taxon>Euteleostomi</taxon>
        <taxon>Mammalia</taxon>
        <taxon>Eutheria</taxon>
        <taxon>Euarchontoglires</taxon>
        <taxon>Glires</taxon>
        <taxon>Rodentia</taxon>
        <taxon>Myomorpha</taxon>
        <taxon>Muroidea</taxon>
        <taxon>Muridae</taxon>
        <taxon>Murinae</taxon>
        <taxon>Mus</taxon>
        <taxon>Mus</taxon>
    </lineage>
</organism>
<reference key="1">
    <citation type="journal article" date="1994" name="Cell">
        <title>Interaction of endothelin-3 with endothelin-B receptor is essential for development of epidermal melanocytes and enteric neurons.</title>
        <authorList>
            <person name="Baynash A.G."/>
            <person name="Hosoda K."/>
            <person name="Giaid A."/>
            <person name="Richardson J.A."/>
            <person name="Emoto N."/>
            <person name="Hammer R.E."/>
            <person name="Yanagisawa M."/>
        </authorList>
    </citation>
    <scope>NUCLEOTIDE SEQUENCE [MRNA]</scope>
</reference>
<reference key="2">
    <citation type="journal article" date="2005" name="Science">
        <title>The transcriptional landscape of the mammalian genome.</title>
        <authorList>
            <person name="Carninci P."/>
            <person name="Kasukawa T."/>
            <person name="Katayama S."/>
            <person name="Gough J."/>
            <person name="Frith M.C."/>
            <person name="Maeda N."/>
            <person name="Oyama R."/>
            <person name="Ravasi T."/>
            <person name="Lenhard B."/>
            <person name="Wells C."/>
            <person name="Kodzius R."/>
            <person name="Shimokawa K."/>
            <person name="Bajic V.B."/>
            <person name="Brenner S.E."/>
            <person name="Batalov S."/>
            <person name="Forrest A.R."/>
            <person name="Zavolan M."/>
            <person name="Davis M.J."/>
            <person name="Wilming L.G."/>
            <person name="Aidinis V."/>
            <person name="Allen J.E."/>
            <person name="Ambesi-Impiombato A."/>
            <person name="Apweiler R."/>
            <person name="Aturaliya R.N."/>
            <person name="Bailey T.L."/>
            <person name="Bansal M."/>
            <person name="Baxter L."/>
            <person name="Beisel K.W."/>
            <person name="Bersano T."/>
            <person name="Bono H."/>
            <person name="Chalk A.M."/>
            <person name="Chiu K.P."/>
            <person name="Choudhary V."/>
            <person name="Christoffels A."/>
            <person name="Clutterbuck D.R."/>
            <person name="Crowe M.L."/>
            <person name="Dalla E."/>
            <person name="Dalrymple B.P."/>
            <person name="de Bono B."/>
            <person name="Della Gatta G."/>
            <person name="di Bernardo D."/>
            <person name="Down T."/>
            <person name="Engstrom P."/>
            <person name="Fagiolini M."/>
            <person name="Faulkner G."/>
            <person name="Fletcher C.F."/>
            <person name="Fukushima T."/>
            <person name="Furuno M."/>
            <person name="Futaki S."/>
            <person name="Gariboldi M."/>
            <person name="Georgii-Hemming P."/>
            <person name="Gingeras T.R."/>
            <person name="Gojobori T."/>
            <person name="Green R.E."/>
            <person name="Gustincich S."/>
            <person name="Harbers M."/>
            <person name="Hayashi Y."/>
            <person name="Hensch T.K."/>
            <person name="Hirokawa N."/>
            <person name="Hill D."/>
            <person name="Huminiecki L."/>
            <person name="Iacono M."/>
            <person name="Ikeo K."/>
            <person name="Iwama A."/>
            <person name="Ishikawa T."/>
            <person name="Jakt M."/>
            <person name="Kanapin A."/>
            <person name="Katoh M."/>
            <person name="Kawasawa Y."/>
            <person name="Kelso J."/>
            <person name="Kitamura H."/>
            <person name="Kitano H."/>
            <person name="Kollias G."/>
            <person name="Krishnan S.P."/>
            <person name="Kruger A."/>
            <person name="Kummerfeld S.K."/>
            <person name="Kurochkin I.V."/>
            <person name="Lareau L.F."/>
            <person name="Lazarevic D."/>
            <person name="Lipovich L."/>
            <person name="Liu J."/>
            <person name="Liuni S."/>
            <person name="McWilliam S."/>
            <person name="Madan Babu M."/>
            <person name="Madera M."/>
            <person name="Marchionni L."/>
            <person name="Matsuda H."/>
            <person name="Matsuzawa S."/>
            <person name="Miki H."/>
            <person name="Mignone F."/>
            <person name="Miyake S."/>
            <person name="Morris K."/>
            <person name="Mottagui-Tabar S."/>
            <person name="Mulder N."/>
            <person name="Nakano N."/>
            <person name="Nakauchi H."/>
            <person name="Ng P."/>
            <person name="Nilsson R."/>
            <person name="Nishiguchi S."/>
            <person name="Nishikawa S."/>
            <person name="Nori F."/>
            <person name="Ohara O."/>
            <person name="Okazaki Y."/>
            <person name="Orlando V."/>
            <person name="Pang K.C."/>
            <person name="Pavan W.J."/>
            <person name="Pavesi G."/>
            <person name="Pesole G."/>
            <person name="Petrovsky N."/>
            <person name="Piazza S."/>
            <person name="Reed J."/>
            <person name="Reid J.F."/>
            <person name="Ring B.Z."/>
            <person name="Ringwald M."/>
            <person name="Rost B."/>
            <person name="Ruan Y."/>
            <person name="Salzberg S.L."/>
            <person name="Sandelin A."/>
            <person name="Schneider C."/>
            <person name="Schoenbach C."/>
            <person name="Sekiguchi K."/>
            <person name="Semple C.A."/>
            <person name="Seno S."/>
            <person name="Sessa L."/>
            <person name="Sheng Y."/>
            <person name="Shibata Y."/>
            <person name="Shimada H."/>
            <person name="Shimada K."/>
            <person name="Silva D."/>
            <person name="Sinclair B."/>
            <person name="Sperling S."/>
            <person name="Stupka E."/>
            <person name="Sugiura K."/>
            <person name="Sultana R."/>
            <person name="Takenaka Y."/>
            <person name="Taki K."/>
            <person name="Tammoja K."/>
            <person name="Tan S.L."/>
            <person name="Tang S."/>
            <person name="Taylor M.S."/>
            <person name="Tegner J."/>
            <person name="Teichmann S.A."/>
            <person name="Ueda H.R."/>
            <person name="van Nimwegen E."/>
            <person name="Verardo R."/>
            <person name="Wei C.L."/>
            <person name="Yagi K."/>
            <person name="Yamanishi H."/>
            <person name="Zabarovsky E."/>
            <person name="Zhu S."/>
            <person name="Zimmer A."/>
            <person name="Hide W."/>
            <person name="Bult C."/>
            <person name="Grimmond S.M."/>
            <person name="Teasdale R.D."/>
            <person name="Liu E.T."/>
            <person name="Brusic V."/>
            <person name="Quackenbush J."/>
            <person name="Wahlestedt C."/>
            <person name="Mattick J.S."/>
            <person name="Hume D.A."/>
            <person name="Kai C."/>
            <person name="Sasaki D."/>
            <person name="Tomaru Y."/>
            <person name="Fukuda S."/>
            <person name="Kanamori-Katayama M."/>
            <person name="Suzuki M."/>
            <person name="Aoki J."/>
            <person name="Arakawa T."/>
            <person name="Iida J."/>
            <person name="Imamura K."/>
            <person name="Itoh M."/>
            <person name="Kato T."/>
            <person name="Kawaji H."/>
            <person name="Kawagashira N."/>
            <person name="Kawashima T."/>
            <person name="Kojima M."/>
            <person name="Kondo S."/>
            <person name="Konno H."/>
            <person name="Nakano K."/>
            <person name="Ninomiya N."/>
            <person name="Nishio T."/>
            <person name="Okada M."/>
            <person name="Plessy C."/>
            <person name="Shibata K."/>
            <person name="Shiraki T."/>
            <person name="Suzuki S."/>
            <person name="Tagami M."/>
            <person name="Waki K."/>
            <person name="Watahiki A."/>
            <person name="Okamura-Oho Y."/>
            <person name="Suzuki H."/>
            <person name="Kawai J."/>
            <person name="Hayashizaki Y."/>
        </authorList>
    </citation>
    <scope>NUCLEOTIDE SEQUENCE [LARGE SCALE MRNA]</scope>
    <source>
        <strain>C57BL/6J</strain>
        <tissue>Head</tissue>
        <tissue>Spinal cord</tissue>
    </source>
</reference>
<feature type="signal peptide" evidence="2">
    <location>
        <begin position="1"/>
        <end position="16"/>
    </location>
</feature>
<feature type="propeptide" id="PRO_0000008114">
    <location>
        <begin position="17"/>
        <end position="94"/>
    </location>
</feature>
<feature type="peptide" id="PRO_0000008115" description="Endothelin-3">
    <location>
        <begin position="97"/>
        <end position="117"/>
    </location>
</feature>
<feature type="propeptide" id="PRO_0000008116">
    <location>
        <begin position="118"/>
        <end position="214"/>
    </location>
</feature>
<feature type="region of interest" description="Disordered" evidence="3">
    <location>
        <begin position="24"/>
        <end position="91"/>
    </location>
</feature>
<feature type="region of interest" description="Endothelin-like">
    <location>
        <begin position="159"/>
        <end position="173"/>
    </location>
</feature>
<feature type="region of interest" description="Disordered" evidence="3">
    <location>
        <begin position="183"/>
        <end position="214"/>
    </location>
</feature>
<feature type="compositionally biased region" description="Polar residues" evidence="3">
    <location>
        <begin position="25"/>
        <end position="35"/>
    </location>
</feature>
<feature type="compositionally biased region" description="Basic and acidic residues" evidence="3">
    <location>
        <begin position="185"/>
        <end position="198"/>
    </location>
</feature>
<feature type="site" description="Cleavage; by KEL" evidence="1">
    <location>
        <begin position="117"/>
        <end position="118"/>
    </location>
</feature>
<feature type="disulfide bond" evidence="1">
    <location>
        <begin position="97"/>
        <end position="111"/>
    </location>
</feature>
<feature type="disulfide bond" evidence="1">
    <location>
        <begin position="99"/>
        <end position="107"/>
    </location>
</feature>
<sequence>MEPGLWLLLGLTVTSAAGLVPCPQSGDSGRASVSQGPPEAGSERGCEETVAGPGERIVSPTVALPAQPESAGQERAPGRSGKQEDKGLPAHHRPRRCTCFTYKDKECVYYCHLDIIWINTPEQTVPYGLSNYRESLRGKRSLGPVPESSQPSPWTRLRCTCMGADDKACAHFCARTRDVTSYSGRAERPAAEEMRETGGPRQRLMSRTDKAHRP</sequence>
<protein>
    <recommendedName>
        <fullName>Endothelin-3</fullName>
        <shortName>ET-3</shortName>
    </recommendedName>
    <alternativeName>
        <fullName>Preproendothelin-3</fullName>
        <shortName>PPET3</shortName>
    </alternativeName>
</protein>
<dbReference type="EMBL" id="U32330">
    <property type="protein sequence ID" value="AAB60509.1"/>
    <property type="molecule type" value="mRNA"/>
</dbReference>
<dbReference type="EMBL" id="AK048006">
    <property type="protein sequence ID" value="BAC33211.1"/>
    <property type="molecule type" value="mRNA"/>
</dbReference>
<dbReference type="EMBL" id="AK049775">
    <property type="protein sequence ID" value="BAC33915.1"/>
    <property type="molecule type" value="mRNA"/>
</dbReference>
<dbReference type="EMBL" id="AK079150">
    <property type="protein sequence ID" value="BAC37561.1"/>
    <property type="molecule type" value="mRNA"/>
</dbReference>
<dbReference type="CCDS" id="CCDS17156.1"/>
<dbReference type="PIR" id="I49351">
    <property type="entry name" value="I49351"/>
</dbReference>
<dbReference type="RefSeq" id="NP_031929.1">
    <property type="nucleotide sequence ID" value="NM_007903.5"/>
</dbReference>
<dbReference type="BMRB" id="P48299"/>
<dbReference type="FunCoup" id="P48299">
    <property type="interactions" value="959"/>
</dbReference>
<dbReference type="STRING" id="10090.ENSMUSP00000029030"/>
<dbReference type="GlyGen" id="P48299">
    <property type="glycosylation" value="1 site"/>
</dbReference>
<dbReference type="PhosphoSitePlus" id="P48299"/>
<dbReference type="PaxDb" id="10090-ENSMUSP00000029030"/>
<dbReference type="ProteomicsDB" id="277683"/>
<dbReference type="Antibodypedia" id="29284">
    <property type="antibodies" value="300 antibodies from 30 providers"/>
</dbReference>
<dbReference type="DNASU" id="13616"/>
<dbReference type="Ensembl" id="ENSMUST00000029030.9">
    <property type="protein sequence ID" value="ENSMUSP00000029030.3"/>
    <property type="gene ID" value="ENSMUSG00000027524.10"/>
</dbReference>
<dbReference type="GeneID" id="13616"/>
<dbReference type="KEGG" id="mmu:13616"/>
<dbReference type="UCSC" id="uc008ofi.2">
    <property type="organism name" value="mouse"/>
</dbReference>
<dbReference type="AGR" id="MGI:95285"/>
<dbReference type="CTD" id="1908"/>
<dbReference type="MGI" id="MGI:95285">
    <property type="gene designation" value="Edn3"/>
</dbReference>
<dbReference type="VEuPathDB" id="HostDB:ENSMUSG00000027524"/>
<dbReference type="eggNOG" id="ENOG502S4W0">
    <property type="taxonomic scope" value="Eukaryota"/>
</dbReference>
<dbReference type="GeneTree" id="ENSGT00950000183053"/>
<dbReference type="InParanoid" id="P48299"/>
<dbReference type="OMA" id="TEEKDQC"/>
<dbReference type="OrthoDB" id="9943124at2759"/>
<dbReference type="PhylomeDB" id="P48299"/>
<dbReference type="TreeFam" id="TF333184"/>
<dbReference type="Reactome" id="R-MMU-375276">
    <property type="pathway name" value="Peptide ligand-binding receptors"/>
</dbReference>
<dbReference type="Reactome" id="R-MMU-416476">
    <property type="pathway name" value="G alpha (q) signalling events"/>
</dbReference>
<dbReference type="BioGRID-ORCS" id="13616">
    <property type="hits" value="0 hits in 77 CRISPR screens"/>
</dbReference>
<dbReference type="PRO" id="PR:P48299"/>
<dbReference type="Proteomes" id="UP000000589">
    <property type="component" value="Chromosome 2"/>
</dbReference>
<dbReference type="RNAct" id="P48299">
    <property type="molecule type" value="protein"/>
</dbReference>
<dbReference type="Bgee" id="ENSMUSG00000027524">
    <property type="expression patterns" value="Expressed in iris and 132 other cell types or tissues"/>
</dbReference>
<dbReference type="ExpressionAtlas" id="P48299">
    <property type="expression patterns" value="baseline and differential"/>
</dbReference>
<dbReference type="GO" id="GO:0005615">
    <property type="term" value="C:extracellular space"/>
    <property type="evidence" value="ECO:0007669"/>
    <property type="project" value="Ensembl"/>
</dbReference>
<dbReference type="GO" id="GO:0031708">
    <property type="term" value="F:endothelin B receptor binding"/>
    <property type="evidence" value="ECO:0007669"/>
    <property type="project" value="Ensembl"/>
</dbReference>
<dbReference type="GO" id="GO:0005179">
    <property type="term" value="F:hormone activity"/>
    <property type="evidence" value="ECO:0007669"/>
    <property type="project" value="Ensembl"/>
</dbReference>
<dbReference type="GO" id="GO:0048675">
    <property type="term" value="P:axon extension"/>
    <property type="evidence" value="ECO:0000314"/>
    <property type="project" value="MGI"/>
</dbReference>
<dbReference type="GO" id="GO:0007411">
    <property type="term" value="P:axon guidance"/>
    <property type="evidence" value="ECO:0000315"/>
    <property type="project" value="MGI"/>
</dbReference>
<dbReference type="GO" id="GO:0008283">
    <property type="term" value="P:cell population proliferation"/>
    <property type="evidence" value="ECO:0000314"/>
    <property type="project" value="MGI"/>
</dbReference>
<dbReference type="GO" id="GO:0007166">
    <property type="term" value="P:cell surface receptor signaling pathway"/>
    <property type="evidence" value="ECO:0007669"/>
    <property type="project" value="Ensembl"/>
</dbReference>
<dbReference type="GO" id="GO:0051649">
    <property type="term" value="P:establishment of localization in cell"/>
    <property type="evidence" value="ECO:0000316"/>
    <property type="project" value="MGI"/>
</dbReference>
<dbReference type="GO" id="GO:0006874">
    <property type="term" value="P:intracellular calcium ion homeostasis"/>
    <property type="evidence" value="ECO:0000316"/>
    <property type="project" value="MGI"/>
</dbReference>
<dbReference type="GO" id="GO:0010961">
    <property type="term" value="P:intracellular magnesium ion homeostasis"/>
    <property type="evidence" value="ECO:0000316"/>
    <property type="project" value="MGI"/>
</dbReference>
<dbReference type="GO" id="GO:0030318">
    <property type="term" value="P:melanocyte differentiation"/>
    <property type="evidence" value="ECO:0000314"/>
    <property type="project" value="MGI"/>
</dbReference>
<dbReference type="GO" id="GO:0001755">
    <property type="term" value="P:neural crest cell migration"/>
    <property type="evidence" value="ECO:0000315"/>
    <property type="project" value="MGI"/>
</dbReference>
<dbReference type="GO" id="GO:0030182">
    <property type="term" value="P:neuron differentiation"/>
    <property type="evidence" value="ECO:0000315"/>
    <property type="project" value="MGI"/>
</dbReference>
<dbReference type="GO" id="GO:0031175">
    <property type="term" value="P:neuron projection development"/>
    <property type="evidence" value="ECO:0000314"/>
    <property type="project" value="MGI"/>
</dbReference>
<dbReference type="GO" id="GO:0030593">
    <property type="term" value="P:neutrophil chemotaxis"/>
    <property type="evidence" value="ECO:0007669"/>
    <property type="project" value="Ensembl"/>
</dbReference>
<dbReference type="GO" id="GO:0030072">
    <property type="term" value="P:peptide hormone secretion"/>
    <property type="evidence" value="ECO:0007669"/>
    <property type="project" value="Ensembl"/>
</dbReference>
<dbReference type="GO" id="GO:0045597">
    <property type="term" value="P:positive regulation of cell differentiation"/>
    <property type="evidence" value="ECO:0000266"/>
    <property type="project" value="MGI"/>
</dbReference>
<dbReference type="GO" id="GO:0008284">
    <property type="term" value="P:positive regulation of cell population proliferation"/>
    <property type="evidence" value="ECO:0000314"/>
    <property type="project" value="MGI"/>
</dbReference>
<dbReference type="GO" id="GO:0010460">
    <property type="term" value="P:positive regulation of heart rate"/>
    <property type="evidence" value="ECO:0007669"/>
    <property type="project" value="Ensembl"/>
</dbReference>
<dbReference type="GO" id="GO:0046887">
    <property type="term" value="P:positive regulation of hormone secretion"/>
    <property type="evidence" value="ECO:0007669"/>
    <property type="project" value="Ensembl"/>
</dbReference>
<dbReference type="GO" id="GO:0002690">
    <property type="term" value="P:positive regulation of leukocyte chemotaxis"/>
    <property type="evidence" value="ECO:0007669"/>
    <property type="project" value="Ensembl"/>
</dbReference>
<dbReference type="GO" id="GO:0043410">
    <property type="term" value="P:positive regulation of MAPK cascade"/>
    <property type="evidence" value="ECO:0007669"/>
    <property type="project" value="Ensembl"/>
</dbReference>
<dbReference type="GO" id="GO:0045840">
    <property type="term" value="P:positive regulation of mitotic nuclear division"/>
    <property type="evidence" value="ECO:0007669"/>
    <property type="project" value="Ensembl"/>
</dbReference>
<dbReference type="GO" id="GO:1901381">
    <property type="term" value="P:positive regulation of potassium ion transmembrane transport"/>
    <property type="evidence" value="ECO:0000316"/>
    <property type="project" value="MGI"/>
</dbReference>
<dbReference type="GO" id="GO:0071805">
    <property type="term" value="P:potassium ion transmembrane transport"/>
    <property type="evidence" value="ECO:0000316"/>
    <property type="project" value="MGI"/>
</dbReference>
<dbReference type="GO" id="GO:0030334">
    <property type="term" value="P:regulation of cell migration"/>
    <property type="evidence" value="ECO:0000315"/>
    <property type="project" value="MGI"/>
</dbReference>
<dbReference type="GO" id="GO:0048070">
    <property type="term" value="P:regulation of developmental pigmentation"/>
    <property type="evidence" value="ECO:0000315"/>
    <property type="project" value="MGI"/>
</dbReference>
<dbReference type="GO" id="GO:0010468">
    <property type="term" value="P:regulation of gene expression"/>
    <property type="evidence" value="ECO:0000266"/>
    <property type="project" value="MGI"/>
</dbReference>
<dbReference type="GO" id="GO:0003100">
    <property type="term" value="P:regulation of systemic arterial blood pressure by endothelin"/>
    <property type="evidence" value="ECO:0007669"/>
    <property type="project" value="Ensembl"/>
</dbReference>
<dbReference type="GO" id="GO:0019229">
    <property type="term" value="P:regulation of vasoconstriction"/>
    <property type="evidence" value="ECO:0007669"/>
    <property type="project" value="InterPro"/>
</dbReference>
<dbReference type="GO" id="GO:0014826">
    <property type="term" value="P:vein smooth muscle contraction"/>
    <property type="evidence" value="ECO:0007669"/>
    <property type="project" value="Ensembl"/>
</dbReference>
<dbReference type="InterPro" id="IPR020475">
    <property type="entry name" value="Endothelin"/>
</dbReference>
<dbReference type="InterPro" id="IPR019764">
    <property type="entry name" value="Endothelin_toxin_CS"/>
</dbReference>
<dbReference type="InterPro" id="IPR001928">
    <property type="entry name" value="Endothln-like_toxin"/>
</dbReference>
<dbReference type="PANTHER" id="PTHR13874">
    <property type="entry name" value="ENDOTHELIN"/>
    <property type="match status" value="1"/>
</dbReference>
<dbReference type="PANTHER" id="PTHR13874:SF11">
    <property type="entry name" value="ENDOTHELIN-3"/>
    <property type="match status" value="1"/>
</dbReference>
<dbReference type="Pfam" id="PF00322">
    <property type="entry name" value="Endothelin"/>
    <property type="match status" value="1"/>
</dbReference>
<dbReference type="PRINTS" id="PR00365">
    <property type="entry name" value="ENDOTHELIN"/>
</dbReference>
<dbReference type="SMART" id="SM00272">
    <property type="entry name" value="END"/>
    <property type="match status" value="2"/>
</dbReference>
<dbReference type="PROSITE" id="PS00270">
    <property type="entry name" value="ENDOTHELIN"/>
    <property type="match status" value="2"/>
</dbReference>
<accession>P48299</accession>
<accession>Q543L0</accession>
<comment type="function">
    <text>Endothelins are endothelium-derived vasoconstrictor peptides.</text>
</comment>
<comment type="subcellular location">
    <subcellularLocation>
        <location>Secreted</location>
    </subcellularLocation>
</comment>
<comment type="similarity">
    <text evidence="4">Belongs to the endothelin/sarafotoxin family.</text>
</comment>
<gene>
    <name type="primary">Edn3</name>
</gene>
<keyword id="KW-0165">Cleavage on pair of basic residues</keyword>
<keyword id="KW-1015">Disulfide bond</keyword>
<keyword id="KW-1185">Reference proteome</keyword>
<keyword id="KW-0964">Secreted</keyword>
<keyword id="KW-0732">Signal</keyword>
<keyword id="KW-0838">Vasoactive</keyword>
<keyword id="KW-0839">Vasoconstrictor</keyword>
<proteinExistence type="evidence at transcript level"/>
<evidence type="ECO:0000250" key="1"/>
<evidence type="ECO:0000255" key="2"/>
<evidence type="ECO:0000256" key="3">
    <source>
        <dbReference type="SAM" id="MobiDB-lite"/>
    </source>
</evidence>
<evidence type="ECO:0000305" key="4"/>
<name>EDN3_MOUSE</name>